<feature type="transit peptide" description="Mitochondrion" evidence="3">
    <location>
        <begin position="1"/>
        <end position="46"/>
    </location>
</feature>
<feature type="chain" id="PRO_0000306096" description="Acyl-coenzyme A synthetase ACSM2, mitochondrial">
    <location>
        <begin position="47"/>
        <end position="572"/>
    </location>
</feature>
<feature type="binding site" evidence="1">
    <location>
        <position position="139"/>
    </location>
    <ligand>
        <name>CoA</name>
        <dbReference type="ChEBI" id="CHEBI:57287"/>
    </ligand>
</feature>
<feature type="binding site" evidence="1">
    <location>
        <begin position="221"/>
        <end position="229"/>
    </location>
    <ligand>
        <name>ATP</name>
        <dbReference type="ChEBI" id="CHEBI:30616"/>
    </ligand>
</feature>
<feature type="binding site" evidence="1">
    <location>
        <begin position="359"/>
        <end position="364"/>
    </location>
    <ligand>
        <name>ATP</name>
        <dbReference type="ChEBI" id="CHEBI:30616"/>
    </ligand>
</feature>
<feature type="binding site" evidence="1">
    <location>
        <position position="364"/>
    </location>
    <ligand>
        <name>substrate</name>
    </ligand>
</feature>
<feature type="binding site" evidence="1">
    <location>
        <position position="446"/>
    </location>
    <ligand>
        <name>ATP</name>
        <dbReference type="ChEBI" id="CHEBI:30616"/>
    </ligand>
</feature>
<feature type="binding site" evidence="1">
    <location>
        <position position="461"/>
    </location>
    <ligand>
        <name>ATP</name>
        <dbReference type="ChEBI" id="CHEBI:30616"/>
    </ligand>
</feature>
<feature type="binding site" evidence="1">
    <location>
        <begin position="469"/>
        <end position="471"/>
    </location>
    <ligand>
        <name>CoA</name>
        <dbReference type="ChEBI" id="CHEBI:57287"/>
    </ligand>
</feature>
<feature type="binding site" evidence="1">
    <location>
        <position position="472"/>
    </location>
    <ligand>
        <name>substrate</name>
    </ligand>
</feature>
<feature type="binding site" evidence="1">
    <location>
        <position position="501"/>
    </location>
    <ligand>
        <name>CoA</name>
        <dbReference type="ChEBI" id="CHEBI:57287"/>
    </ligand>
</feature>
<feature type="binding site" evidence="1">
    <location>
        <position position="532"/>
    </location>
    <ligand>
        <name>CoA</name>
        <dbReference type="ChEBI" id="CHEBI:57287"/>
    </ligand>
</feature>
<feature type="binding site" evidence="1">
    <location>
        <begin position="540"/>
        <end position="542"/>
    </location>
    <ligand>
        <name>CoA</name>
        <dbReference type="ChEBI" id="CHEBI:57287"/>
    </ligand>
</feature>
<feature type="binding site" evidence="1">
    <location>
        <position position="557"/>
    </location>
    <ligand>
        <name>ATP</name>
        <dbReference type="ChEBI" id="CHEBI:30616"/>
    </ligand>
</feature>
<feature type="sequence conflict" description="In Ref. 1; AAD05209." evidence="5" ref="1">
    <original>T</original>
    <variation>S</variation>
    <location>
        <position position="22"/>
    </location>
</feature>
<feature type="sequence conflict" description="In Ref. 2; AAH78721." evidence="5" ref="2">
    <original>G</original>
    <variation>R</variation>
    <location>
        <position position="99"/>
    </location>
</feature>
<sequence>MHWLWKIPRLCTFWGTEMFHRTFHMNIKKLMPIQWGHQEVPAKFNFASDVIDHWASLEKAGKRSPGPALWWMNGSGEELKWNFRELSEISKQTANVLTGACGLQRGDRVAVVLPRVPEWWLVTLGCMRSGLVFMPGTTQMKSTDILYRLQSSKARAIVAGDEVVQEVDAVAPDCSFLKIKLLVSEKNREGWLNFKALLKDASPIHQCVETVSQESAAIYFTSGTSGPPKMAEHSHCSLGLKAKMDAGWTGLGPSDTMWTISDTGWILNILGSFLEPWVLGTCIFVHLLPKFDPQTVLKVLSSYPINTLLGAPLIYRMLLQQDLSSYKFPHLHSCFSGGETLLPETLESWKAKTGLEIREIYGQTETGITCRVSRTMKVKPGYLGTAIVPYDVQVIDEQGNVLPPGKEGDMALRVKPIRPIGMFSGYVDNPKKTQANIRGDFWLLGDRGIKDTEGYFHFMGRTDDIINSSGYRIGPSEVENALMEHPAVVETAVISSPDPIRREVVKAFVVLAPEFLSHDQDQLTKVLQEHVKSVTAPYKYPRKVEFVLDLPKTITGKIERAKLRAKEWKTSG</sequence>
<organism>
    <name type="scientific">Rattus norvegicus</name>
    <name type="common">Rat</name>
    <dbReference type="NCBI Taxonomy" id="10116"/>
    <lineage>
        <taxon>Eukaryota</taxon>
        <taxon>Metazoa</taxon>
        <taxon>Chordata</taxon>
        <taxon>Craniata</taxon>
        <taxon>Vertebrata</taxon>
        <taxon>Euteleostomi</taxon>
        <taxon>Mammalia</taxon>
        <taxon>Eutheria</taxon>
        <taxon>Euarchontoglires</taxon>
        <taxon>Glires</taxon>
        <taxon>Rodentia</taxon>
        <taxon>Myomorpha</taxon>
        <taxon>Muroidea</taxon>
        <taxon>Muridae</taxon>
        <taxon>Murinae</taxon>
        <taxon>Rattus</taxon>
    </lineage>
</organism>
<protein>
    <recommendedName>
        <fullName>Acyl-coenzyme A synthetase ACSM2, mitochondrial</fullName>
        <ecNumber evidence="2">6.2.1.2</ecNumber>
    </recommendedName>
    <alternativeName>
        <fullName>Acyl-CoA synthetase medium-chain family member 2</fullName>
    </alternativeName>
    <alternativeName>
        <fullName>Benzoate--CoA ligase</fullName>
        <ecNumber evidence="2">6.2.1.25</ecNumber>
    </alternativeName>
    <alternativeName>
        <fullName>Butyrate--CoA ligase 2</fullName>
    </alternativeName>
    <alternativeName>
        <fullName>Butyryl-coenzyme A synthetase 2</fullName>
    </alternativeName>
    <alternativeName>
        <fullName>Kidney-specific protein KS</fullName>
    </alternativeName>
    <alternativeName>
        <fullName>Middle-chain acyl-CoA synthetase 2</fullName>
    </alternativeName>
</protein>
<comment type="function">
    <text evidence="2">Catalyzes the activation of fatty acids by CoA to produce an acyl-CoA, the first step in fatty acid metabolism (By similarity). Capable of activating medium-chain fatty acids (e.g. butyric (C4) to decanoic (C10) acids), and certain carboxylate-containing xenobiotics, e.g. benzoate (By similarity).</text>
</comment>
<comment type="catalytic activity">
    <reaction evidence="2">
        <text>a medium-chain fatty acid + ATP + CoA = a medium-chain fatty acyl-CoA + AMP + diphosphate</text>
        <dbReference type="Rhea" id="RHEA:48340"/>
        <dbReference type="ChEBI" id="CHEBI:30616"/>
        <dbReference type="ChEBI" id="CHEBI:33019"/>
        <dbReference type="ChEBI" id="CHEBI:57287"/>
        <dbReference type="ChEBI" id="CHEBI:59558"/>
        <dbReference type="ChEBI" id="CHEBI:90546"/>
        <dbReference type="ChEBI" id="CHEBI:456215"/>
        <dbReference type="EC" id="6.2.1.2"/>
    </reaction>
    <physiologicalReaction direction="left-to-right" evidence="2">
        <dbReference type="Rhea" id="RHEA:48341"/>
    </physiologicalReaction>
</comment>
<comment type="catalytic activity">
    <reaction evidence="2">
        <text>benzoate + ATP + CoA = benzoyl-CoA + AMP + diphosphate</text>
        <dbReference type="Rhea" id="RHEA:10132"/>
        <dbReference type="ChEBI" id="CHEBI:16150"/>
        <dbReference type="ChEBI" id="CHEBI:30616"/>
        <dbReference type="ChEBI" id="CHEBI:33019"/>
        <dbReference type="ChEBI" id="CHEBI:57287"/>
        <dbReference type="ChEBI" id="CHEBI:57369"/>
        <dbReference type="ChEBI" id="CHEBI:456215"/>
        <dbReference type="EC" id="6.2.1.25"/>
    </reaction>
    <physiologicalReaction direction="left-to-right" evidence="2">
        <dbReference type="Rhea" id="RHEA:10133"/>
    </physiologicalReaction>
</comment>
<comment type="catalytic activity">
    <reaction evidence="2">
        <text>hexanoate + ATP + CoA = hexanoyl-CoA + AMP + diphosphate</text>
        <dbReference type="Rhea" id="RHEA:43740"/>
        <dbReference type="ChEBI" id="CHEBI:17120"/>
        <dbReference type="ChEBI" id="CHEBI:30616"/>
        <dbReference type="ChEBI" id="CHEBI:33019"/>
        <dbReference type="ChEBI" id="CHEBI:57287"/>
        <dbReference type="ChEBI" id="CHEBI:62620"/>
        <dbReference type="ChEBI" id="CHEBI:456215"/>
    </reaction>
    <physiologicalReaction direction="left-to-right" evidence="2">
        <dbReference type="Rhea" id="RHEA:43741"/>
    </physiologicalReaction>
</comment>
<comment type="catalytic activity">
    <reaction evidence="2">
        <text>butanoate + ATP + CoA = butanoyl-CoA + AMP + diphosphate</text>
        <dbReference type="Rhea" id="RHEA:46172"/>
        <dbReference type="ChEBI" id="CHEBI:17968"/>
        <dbReference type="ChEBI" id="CHEBI:30616"/>
        <dbReference type="ChEBI" id="CHEBI:33019"/>
        <dbReference type="ChEBI" id="CHEBI:57287"/>
        <dbReference type="ChEBI" id="CHEBI:57371"/>
        <dbReference type="ChEBI" id="CHEBI:456215"/>
    </reaction>
    <physiologicalReaction direction="left-to-right" evidence="2">
        <dbReference type="Rhea" id="RHEA:46173"/>
    </physiologicalReaction>
</comment>
<comment type="catalytic activity">
    <reaction evidence="2">
        <text>octanoate + ATP + CoA = octanoyl-CoA + AMP + diphosphate</text>
        <dbReference type="Rhea" id="RHEA:33631"/>
        <dbReference type="ChEBI" id="CHEBI:25646"/>
        <dbReference type="ChEBI" id="CHEBI:30616"/>
        <dbReference type="ChEBI" id="CHEBI:33019"/>
        <dbReference type="ChEBI" id="CHEBI:57287"/>
        <dbReference type="ChEBI" id="CHEBI:57386"/>
        <dbReference type="ChEBI" id="CHEBI:456215"/>
    </reaction>
    <physiologicalReaction direction="left-to-right" evidence="2">
        <dbReference type="Rhea" id="RHEA:33632"/>
    </physiologicalReaction>
</comment>
<comment type="catalytic activity">
    <reaction evidence="2">
        <text>decanoate + ATP + CoA = decanoyl-CoA + AMP + diphosphate</text>
        <dbReference type="Rhea" id="RHEA:33627"/>
        <dbReference type="ChEBI" id="CHEBI:27689"/>
        <dbReference type="ChEBI" id="CHEBI:30616"/>
        <dbReference type="ChEBI" id="CHEBI:33019"/>
        <dbReference type="ChEBI" id="CHEBI:57287"/>
        <dbReference type="ChEBI" id="CHEBI:61430"/>
        <dbReference type="ChEBI" id="CHEBI:456215"/>
    </reaction>
    <physiologicalReaction direction="left-to-right" evidence="2">
        <dbReference type="Rhea" id="RHEA:33628"/>
    </physiologicalReaction>
</comment>
<comment type="cofactor">
    <cofactor evidence="2">
        <name>Mg(2+)</name>
        <dbReference type="ChEBI" id="CHEBI:18420"/>
    </cofactor>
    <cofactor evidence="2">
        <name>Mn(2+)</name>
        <dbReference type="ChEBI" id="CHEBI:29035"/>
    </cofactor>
</comment>
<comment type="subunit">
    <text evidence="2">Monomer.</text>
</comment>
<comment type="subcellular location">
    <subcellularLocation>
        <location evidence="2">Mitochondrion</location>
    </subcellularLocation>
</comment>
<comment type="tissue specificity">
    <text evidence="4">Detected in kidney, in proximal tubules.</text>
</comment>
<comment type="developmental stage">
    <text evidence="4">First detected in kidney from 1 week old rats. Not detectable in fetal kidney and in kidney from newborn rats.</text>
</comment>
<comment type="induction">
    <text evidence="4">Down-regulated in kidneys from a strain of spontaneously hypertensive rats (SHR). Down-regulated after unilateral ureteral obstruction or unilateral nephrectomy.</text>
</comment>
<comment type="similarity">
    <text evidence="5">Belongs to the ATP-dependent AMP-binding enzyme family.</text>
</comment>
<name>ACSM2_RAT</name>
<gene>
    <name type="primary">Acsm2</name>
    <name type="synonym">Ks</name>
</gene>
<keyword id="KW-0067">ATP-binding</keyword>
<keyword id="KW-0276">Fatty acid metabolism</keyword>
<keyword id="KW-0436">Ligase</keyword>
<keyword id="KW-0443">Lipid metabolism</keyword>
<keyword id="KW-0460">Magnesium</keyword>
<keyword id="KW-0479">Metal-binding</keyword>
<keyword id="KW-0496">Mitochondrion</keyword>
<keyword id="KW-0547">Nucleotide-binding</keyword>
<keyword id="KW-1185">Reference proteome</keyword>
<keyword id="KW-0809">Transit peptide</keyword>
<evidence type="ECO:0000250" key="1"/>
<evidence type="ECO:0000250" key="2">
    <source>
        <dbReference type="UniProtKB" id="Q68CK6"/>
    </source>
</evidence>
<evidence type="ECO:0000255" key="3"/>
<evidence type="ECO:0000269" key="4">
    <source>
    </source>
</evidence>
<evidence type="ECO:0000305" key="5"/>
<reference key="1">
    <citation type="journal article" date="1998" name="Kidney Int.">
        <title>Molecular cloning of KS, a novel rat gene expressed exclusively in the kidney.</title>
        <authorList>
            <person name="Hilgers K.F."/>
            <person name="Nagaraj S.K."/>
            <person name="Karginova E.A."/>
            <person name="Kazakova I.G."/>
            <person name="Chevalier R.L."/>
            <person name="Carey R.M."/>
            <person name="Pentz E.S."/>
            <person name="Gomez R.A."/>
        </authorList>
    </citation>
    <scope>NUCLEOTIDE SEQUENCE [MRNA]</scope>
    <scope>DEVELOPMENTAL STAGE</scope>
    <scope>INDUCTION</scope>
    <scope>TISSUE SPECIFICITY</scope>
    <source>
        <strain>Sprague-Dawley</strain>
        <tissue>Kidney</tissue>
    </source>
</reference>
<reference key="2">
    <citation type="journal article" date="2004" name="Genome Res.">
        <title>The status, quality, and expansion of the NIH full-length cDNA project: the Mammalian Gene Collection (MGC).</title>
        <authorList>
            <consortium name="The MGC Project Team"/>
        </authorList>
    </citation>
    <scope>NUCLEOTIDE SEQUENCE [LARGE SCALE MRNA]</scope>
    <source>
        <tissue>Kidney</tissue>
    </source>
</reference>
<proteinExistence type="evidence at transcript level"/>
<dbReference type="EC" id="6.2.1.2" evidence="2"/>
<dbReference type="EC" id="6.2.1.25" evidence="2"/>
<dbReference type="EMBL" id="AF062389">
    <property type="protein sequence ID" value="AAD05209.1"/>
    <property type="molecule type" value="mRNA"/>
</dbReference>
<dbReference type="EMBL" id="BC078721">
    <property type="protein sequence ID" value="AAH78721.1"/>
    <property type="molecule type" value="mRNA"/>
</dbReference>
<dbReference type="RefSeq" id="NP_653349.1">
    <property type="nucleotide sequence ID" value="NM_144748.1"/>
</dbReference>
<dbReference type="SMR" id="O70490"/>
<dbReference type="FunCoup" id="O70490">
    <property type="interactions" value="30"/>
</dbReference>
<dbReference type="iPTMnet" id="O70490"/>
<dbReference type="PhosphoSitePlus" id="O70490"/>
<dbReference type="PaxDb" id="10116-ENSRNOP00000020587"/>
<dbReference type="GeneID" id="246263"/>
<dbReference type="KEGG" id="rno:246263"/>
<dbReference type="UCSC" id="RGD:708383">
    <property type="organism name" value="rat"/>
</dbReference>
<dbReference type="AGR" id="RGD:708383"/>
<dbReference type="CTD" id="233799"/>
<dbReference type="RGD" id="708383">
    <property type="gene designation" value="Acsm2"/>
</dbReference>
<dbReference type="eggNOG" id="KOG1175">
    <property type="taxonomic scope" value="Eukaryota"/>
</dbReference>
<dbReference type="InParanoid" id="O70490"/>
<dbReference type="OrthoDB" id="6614653at2759"/>
<dbReference type="PhylomeDB" id="O70490"/>
<dbReference type="TreeFam" id="TF354287"/>
<dbReference type="Reactome" id="R-RNO-177128">
    <property type="pathway name" value="Conjugation of salicylate with glycine"/>
</dbReference>
<dbReference type="Reactome" id="R-RNO-177135">
    <property type="pathway name" value="Conjugation of benzoate with glycine"/>
</dbReference>
<dbReference type="Reactome" id="R-RNO-177162">
    <property type="pathway name" value="Conjugation of phenylacetate with glutamine"/>
</dbReference>
<dbReference type="Reactome" id="R-RNO-9749641">
    <property type="pathway name" value="Aspirin ADME"/>
</dbReference>
<dbReference type="PRO" id="PR:O70490"/>
<dbReference type="Proteomes" id="UP000002494">
    <property type="component" value="Unplaced"/>
</dbReference>
<dbReference type="GO" id="GO:0005759">
    <property type="term" value="C:mitochondrial matrix"/>
    <property type="evidence" value="ECO:0000318"/>
    <property type="project" value="GO_Central"/>
</dbReference>
<dbReference type="GO" id="GO:0005739">
    <property type="term" value="C:mitochondrion"/>
    <property type="evidence" value="ECO:0000250"/>
    <property type="project" value="UniProtKB"/>
</dbReference>
<dbReference type="GO" id="GO:0005524">
    <property type="term" value="F:ATP binding"/>
    <property type="evidence" value="ECO:0007669"/>
    <property type="project" value="UniProtKB-KW"/>
</dbReference>
<dbReference type="GO" id="GO:0018858">
    <property type="term" value="F:benzoate-CoA ligase activity"/>
    <property type="evidence" value="ECO:0000250"/>
    <property type="project" value="UniProtKB"/>
</dbReference>
<dbReference type="GO" id="GO:0102391">
    <property type="term" value="F:decanoate-CoA ligase activity"/>
    <property type="evidence" value="ECO:0007669"/>
    <property type="project" value="RHEA"/>
</dbReference>
<dbReference type="GO" id="GO:0015645">
    <property type="term" value="F:fatty acid ligase activity"/>
    <property type="evidence" value="ECO:0000318"/>
    <property type="project" value="GO_Central"/>
</dbReference>
<dbReference type="GO" id="GO:0004321">
    <property type="term" value="F:fatty-acyl-CoA synthase activity"/>
    <property type="evidence" value="ECO:0000318"/>
    <property type="project" value="GO_Central"/>
</dbReference>
<dbReference type="GO" id="GO:0031956">
    <property type="term" value="F:medium-chain fatty acid-CoA ligase activity"/>
    <property type="evidence" value="ECO:0000266"/>
    <property type="project" value="RGD"/>
</dbReference>
<dbReference type="GO" id="GO:0046872">
    <property type="term" value="F:metal ion binding"/>
    <property type="evidence" value="ECO:0007669"/>
    <property type="project" value="UniProtKB-KW"/>
</dbReference>
<dbReference type="GO" id="GO:0006637">
    <property type="term" value="P:acyl-CoA metabolic process"/>
    <property type="evidence" value="ECO:0000318"/>
    <property type="project" value="GO_Central"/>
</dbReference>
<dbReference type="GO" id="GO:0006633">
    <property type="term" value="P:fatty acid biosynthetic process"/>
    <property type="evidence" value="ECO:0000318"/>
    <property type="project" value="GO_Central"/>
</dbReference>
<dbReference type="GO" id="GO:0036112">
    <property type="term" value="P:medium-chain fatty-acyl-CoA metabolic process"/>
    <property type="evidence" value="ECO:0000266"/>
    <property type="project" value="RGD"/>
</dbReference>
<dbReference type="FunFam" id="3.40.50.12780:FF:000007">
    <property type="entry name" value="Acyl-coenzyme A synthetase ACSM2A, mitochondrial"/>
    <property type="match status" value="1"/>
</dbReference>
<dbReference type="FunFam" id="3.30.300.30:FF:000005">
    <property type="entry name" value="Acyl-coenzyme A synthetase ACSM5, mitochondrial"/>
    <property type="match status" value="1"/>
</dbReference>
<dbReference type="Gene3D" id="3.30.300.30">
    <property type="match status" value="1"/>
</dbReference>
<dbReference type="Gene3D" id="3.40.50.12780">
    <property type="entry name" value="N-terminal domain of ligase-like"/>
    <property type="match status" value="1"/>
</dbReference>
<dbReference type="InterPro" id="IPR025110">
    <property type="entry name" value="AMP-bd_C"/>
</dbReference>
<dbReference type="InterPro" id="IPR045851">
    <property type="entry name" value="AMP-bd_C_sf"/>
</dbReference>
<dbReference type="InterPro" id="IPR020845">
    <property type="entry name" value="AMP-binding_CS"/>
</dbReference>
<dbReference type="InterPro" id="IPR000873">
    <property type="entry name" value="AMP-dep_synth/lig_dom"/>
</dbReference>
<dbReference type="InterPro" id="IPR042099">
    <property type="entry name" value="ANL_N_sf"/>
</dbReference>
<dbReference type="InterPro" id="IPR051087">
    <property type="entry name" value="Mitochondrial_ACSM"/>
</dbReference>
<dbReference type="PANTHER" id="PTHR43605">
    <property type="entry name" value="ACYL-COENZYME A SYNTHETASE"/>
    <property type="match status" value="1"/>
</dbReference>
<dbReference type="PANTHER" id="PTHR43605:SF3">
    <property type="entry name" value="ACYL-COENZYME A SYNTHETASE ACSM2B, MITOCHONDRIAL"/>
    <property type="match status" value="1"/>
</dbReference>
<dbReference type="Pfam" id="PF00501">
    <property type="entry name" value="AMP-binding"/>
    <property type="match status" value="1"/>
</dbReference>
<dbReference type="Pfam" id="PF13193">
    <property type="entry name" value="AMP-binding_C"/>
    <property type="match status" value="1"/>
</dbReference>
<dbReference type="SUPFAM" id="SSF56801">
    <property type="entry name" value="Acetyl-CoA synthetase-like"/>
    <property type="match status" value="1"/>
</dbReference>
<dbReference type="PROSITE" id="PS00455">
    <property type="entry name" value="AMP_BINDING"/>
    <property type="match status" value="1"/>
</dbReference>
<accession>O70490</accession>
<accession>Q6AZ63</accession>